<gene>
    <name type="ordered locus">PFLU_1319</name>
</gene>
<feature type="chain" id="PRO_1000212270" description="UPF0225 protein PFLU_1319">
    <location>
        <begin position="1"/>
        <end position="156"/>
    </location>
</feature>
<sequence length="156" mass="16964">MSTSICPCGSGNLLDACCGHYHAGHPAPCATALMRSRYSAYVLGLVDYLVATTLPAQQAGLDRHAIGAWSAQSTWLGLEVESSEVFGGQPEHAFVTFTARWHDSTGEHSHREQSSFVQNDGRWYFIDPTVEVKVGRNDACLCGSGQKFKKCCSSYL</sequence>
<evidence type="ECO:0000255" key="1">
    <source>
        <dbReference type="HAMAP-Rule" id="MF_00612"/>
    </source>
</evidence>
<name>Y1319_PSEFS</name>
<comment type="similarity">
    <text evidence="1">Belongs to the UPF0225 family.</text>
</comment>
<accession>C3K7J3</accession>
<reference key="1">
    <citation type="journal article" date="2009" name="Genome Biol.">
        <title>Genomic and genetic analyses of diversity and plant interactions of Pseudomonas fluorescens.</title>
        <authorList>
            <person name="Silby M.W."/>
            <person name="Cerdeno-Tarraga A.M."/>
            <person name="Vernikos G.S."/>
            <person name="Giddens S.R."/>
            <person name="Jackson R.W."/>
            <person name="Preston G.M."/>
            <person name="Zhang X.-X."/>
            <person name="Moon C.D."/>
            <person name="Gehrig S.M."/>
            <person name="Godfrey S.A.C."/>
            <person name="Knight C.G."/>
            <person name="Malone J.G."/>
            <person name="Robinson Z."/>
            <person name="Spiers A.J."/>
            <person name="Harris S."/>
            <person name="Challis G.L."/>
            <person name="Yaxley A.M."/>
            <person name="Harris D."/>
            <person name="Seeger K."/>
            <person name="Murphy L."/>
            <person name="Rutter S."/>
            <person name="Squares R."/>
            <person name="Quail M.A."/>
            <person name="Saunders E."/>
            <person name="Mavromatis K."/>
            <person name="Brettin T.S."/>
            <person name="Bentley S.D."/>
            <person name="Hothersall J."/>
            <person name="Stephens E."/>
            <person name="Thomas C.M."/>
            <person name="Parkhill J."/>
            <person name="Levy S.B."/>
            <person name="Rainey P.B."/>
            <person name="Thomson N.R."/>
        </authorList>
    </citation>
    <scope>NUCLEOTIDE SEQUENCE [LARGE SCALE GENOMIC DNA]</scope>
    <source>
        <strain>SBW25</strain>
    </source>
</reference>
<organism>
    <name type="scientific">Pseudomonas fluorescens (strain SBW25)</name>
    <dbReference type="NCBI Taxonomy" id="216595"/>
    <lineage>
        <taxon>Bacteria</taxon>
        <taxon>Pseudomonadati</taxon>
        <taxon>Pseudomonadota</taxon>
        <taxon>Gammaproteobacteria</taxon>
        <taxon>Pseudomonadales</taxon>
        <taxon>Pseudomonadaceae</taxon>
        <taxon>Pseudomonas</taxon>
    </lineage>
</organism>
<protein>
    <recommendedName>
        <fullName evidence="1">UPF0225 protein PFLU_1319</fullName>
    </recommendedName>
</protein>
<dbReference type="EMBL" id="AM181176">
    <property type="protein sequence ID" value="CAY47574.1"/>
    <property type="molecule type" value="Genomic_DNA"/>
</dbReference>
<dbReference type="RefSeq" id="WP_012722631.1">
    <property type="nucleotide sequence ID" value="NC_012660.1"/>
</dbReference>
<dbReference type="SMR" id="C3K7J3"/>
<dbReference type="STRING" id="294.SRM1_01234"/>
<dbReference type="PATRIC" id="fig|216595.4.peg.1550"/>
<dbReference type="eggNOG" id="COG3012">
    <property type="taxonomic scope" value="Bacteria"/>
</dbReference>
<dbReference type="HOGENOM" id="CLU_099590_0_1_6"/>
<dbReference type="OrthoDB" id="21421at2"/>
<dbReference type="Gene3D" id="3.10.450.50">
    <property type="match status" value="1"/>
</dbReference>
<dbReference type="HAMAP" id="MF_00612">
    <property type="entry name" value="UPF0225"/>
    <property type="match status" value="1"/>
</dbReference>
<dbReference type="InterPro" id="IPR032710">
    <property type="entry name" value="NTF2-like_dom_sf"/>
</dbReference>
<dbReference type="InterPro" id="IPR004027">
    <property type="entry name" value="SEC_C_motif"/>
</dbReference>
<dbReference type="InterPro" id="IPR023006">
    <property type="entry name" value="UPF0225"/>
</dbReference>
<dbReference type="InterPro" id="IPR048469">
    <property type="entry name" value="YchJ-like_M"/>
</dbReference>
<dbReference type="NCBIfam" id="NF001213">
    <property type="entry name" value="PRK00183.1"/>
    <property type="match status" value="1"/>
</dbReference>
<dbReference type="NCBIfam" id="NF002449">
    <property type="entry name" value="PRK01617.1"/>
    <property type="match status" value="1"/>
</dbReference>
<dbReference type="NCBIfam" id="NF002486">
    <property type="entry name" value="PRK01752.1"/>
    <property type="match status" value="1"/>
</dbReference>
<dbReference type="PANTHER" id="PTHR33747:SF1">
    <property type="entry name" value="ADENYLATE CYCLASE-ASSOCIATED CAP C-TERMINAL DOMAIN-CONTAINING PROTEIN"/>
    <property type="match status" value="1"/>
</dbReference>
<dbReference type="PANTHER" id="PTHR33747">
    <property type="entry name" value="UPF0225 PROTEIN SCO1677"/>
    <property type="match status" value="1"/>
</dbReference>
<dbReference type="Pfam" id="PF02810">
    <property type="entry name" value="SEC-C"/>
    <property type="match status" value="1"/>
</dbReference>
<dbReference type="Pfam" id="PF17775">
    <property type="entry name" value="YchJ_M-like"/>
    <property type="match status" value="1"/>
</dbReference>
<dbReference type="SUPFAM" id="SSF54427">
    <property type="entry name" value="NTF2-like"/>
    <property type="match status" value="1"/>
</dbReference>
<dbReference type="SUPFAM" id="SSF103642">
    <property type="entry name" value="Sec-C motif"/>
    <property type="match status" value="1"/>
</dbReference>
<proteinExistence type="inferred from homology"/>